<dbReference type="EC" id="5.3.1.24" evidence="1"/>
<dbReference type="EMBL" id="CP000712">
    <property type="protein sequence ID" value="ABQ79890.1"/>
    <property type="molecule type" value="Genomic_DNA"/>
</dbReference>
<dbReference type="SMR" id="A5W6Y0"/>
<dbReference type="KEGG" id="ppf:Pput_3766"/>
<dbReference type="eggNOG" id="COG0135">
    <property type="taxonomic scope" value="Bacteria"/>
</dbReference>
<dbReference type="HOGENOM" id="CLU_076364_2_0_6"/>
<dbReference type="UniPathway" id="UPA00035">
    <property type="reaction ID" value="UER00042"/>
</dbReference>
<dbReference type="GO" id="GO:0004640">
    <property type="term" value="F:phosphoribosylanthranilate isomerase activity"/>
    <property type="evidence" value="ECO:0007669"/>
    <property type="project" value="UniProtKB-UniRule"/>
</dbReference>
<dbReference type="GO" id="GO:0000162">
    <property type="term" value="P:L-tryptophan biosynthetic process"/>
    <property type="evidence" value="ECO:0007669"/>
    <property type="project" value="UniProtKB-UniRule"/>
</dbReference>
<dbReference type="CDD" id="cd00405">
    <property type="entry name" value="PRAI"/>
    <property type="match status" value="1"/>
</dbReference>
<dbReference type="FunFam" id="3.20.20.70:FF:000075">
    <property type="entry name" value="Tryptophan biosynthesis protein TRP1"/>
    <property type="match status" value="1"/>
</dbReference>
<dbReference type="Gene3D" id="3.20.20.70">
    <property type="entry name" value="Aldolase class I"/>
    <property type="match status" value="1"/>
</dbReference>
<dbReference type="HAMAP" id="MF_00135">
    <property type="entry name" value="PRAI"/>
    <property type="match status" value="1"/>
</dbReference>
<dbReference type="InterPro" id="IPR013785">
    <property type="entry name" value="Aldolase_TIM"/>
</dbReference>
<dbReference type="InterPro" id="IPR001240">
    <property type="entry name" value="PRAI_dom"/>
</dbReference>
<dbReference type="InterPro" id="IPR011060">
    <property type="entry name" value="RibuloseP-bd_barrel"/>
</dbReference>
<dbReference type="InterPro" id="IPR044643">
    <property type="entry name" value="TrpF_fam"/>
</dbReference>
<dbReference type="NCBIfam" id="NF002298">
    <property type="entry name" value="PRK01222.1-4"/>
    <property type="match status" value="1"/>
</dbReference>
<dbReference type="NCBIfam" id="NF002299">
    <property type="entry name" value="PRK01222.1-6"/>
    <property type="match status" value="1"/>
</dbReference>
<dbReference type="PANTHER" id="PTHR42894">
    <property type="entry name" value="N-(5'-PHOSPHORIBOSYL)ANTHRANILATE ISOMERASE"/>
    <property type="match status" value="1"/>
</dbReference>
<dbReference type="PANTHER" id="PTHR42894:SF1">
    <property type="entry name" value="N-(5'-PHOSPHORIBOSYL)ANTHRANILATE ISOMERASE"/>
    <property type="match status" value="1"/>
</dbReference>
<dbReference type="Pfam" id="PF00697">
    <property type="entry name" value="PRAI"/>
    <property type="match status" value="1"/>
</dbReference>
<dbReference type="SUPFAM" id="SSF51366">
    <property type="entry name" value="Ribulose-phoshate binding barrel"/>
    <property type="match status" value="1"/>
</dbReference>
<comment type="catalytic activity">
    <reaction evidence="1">
        <text>N-(5-phospho-beta-D-ribosyl)anthranilate = 1-(2-carboxyphenylamino)-1-deoxy-D-ribulose 5-phosphate</text>
        <dbReference type="Rhea" id="RHEA:21540"/>
        <dbReference type="ChEBI" id="CHEBI:18277"/>
        <dbReference type="ChEBI" id="CHEBI:58613"/>
        <dbReference type="EC" id="5.3.1.24"/>
    </reaction>
</comment>
<comment type="pathway">
    <text evidence="1">Amino-acid biosynthesis; L-tryptophan biosynthesis; L-tryptophan from chorismate: step 3/5.</text>
</comment>
<comment type="similarity">
    <text evidence="1">Belongs to the TrpF family.</text>
</comment>
<proteinExistence type="inferred from homology"/>
<name>TRPF_PSEP1</name>
<protein>
    <recommendedName>
        <fullName evidence="1">N-(5'-phosphoribosyl)anthranilate isomerase</fullName>
        <shortName evidence="1">PRAI</shortName>
        <ecNumber evidence="1">5.3.1.24</ecNumber>
    </recommendedName>
</protein>
<keyword id="KW-0028">Amino-acid biosynthesis</keyword>
<keyword id="KW-0057">Aromatic amino acid biosynthesis</keyword>
<keyword id="KW-0413">Isomerase</keyword>
<keyword id="KW-0822">Tryptophan biosynthesis</keyword>
<gene>
    <name evidence="1" type="primary">trpF</name>
    <name type="ordered locus">Pput_3766</name>
</gene>
<reference key="1">
    <citation type="submission" date="2007-05" db="EMBL/GenBank/DDBJ databases">
        <title>Complete sequence of Pseudomonas putida F1.</title>
        <authorList>
            <consortium name="US DOE Joint Genome Institute"/>
            <person name="Copeland A."/>
            <person name="Lucas S."/>
            <person name="Lapidus A."/>
            <person name="Barry K."/>
            <person name="Detter J.C."/>
            <person name="Glavina del Rio T."/>
            <person name="Hammon N."/>
            <person name="Israni S."/>
            <person name="Dalin E."/>
            <person name="Tice H."/>
            <person name="Pitluck S."/>
            <person name="Chain P."/>
            <person name="Malfatti S."/>
            <person name="Shin M."/>
            <person name="Vergez L."/>
            <person name="Schmutz J."/>
            <person name="Larimer F."/>
            <person name="Land M."/>
            <person name="Hauser L."/>
            <person name="Kyrpides N."/>
            <person name="Lykidis A."/>
            <person name="Parales R."/>
            <person name="Richardson P."/>
        </authorList>
    </citation>
    <scope>NUCLEOTIDE SEQUENCE [LARGE SCALE GENOMIC DNA]</scope>
    <source>
        <strain>ATCC 700007 / DSM 6899 / JCM 31910 / BCRC 17059 / LMG 24140 / F1</strain>
    </source>
</reference>
<evidence type="ECO:0000255" key="1">
    <source>
        <dbReference type="HAMAP-Rule" id="MF_00135"/>
    </source>
</evidence>
<accession>A5W6Y0</accession>
<feature type="chain" id="PRO_1000018624" description="N-(5'-phosphoribosyl)anthranilate isomerase">
    <location>
        <begin position="1"/>
        <end position="206"/>
    </location>
</feature>
<organism>
    <name type="scientific">Pseudomonas putida (strain ATCC 700007 / DSM 6899 / JCM 31910 / BCRC 17059 / LMG 24140 / F1)</name>
    <dbReference type="NCBI Taxonomy" id="351746"/>
    <lineage>
        <taxon>Bacteria</taxon>
        <taxon>Pseudomonadati</taxon>
        <taxon>Pseudomonadota</taxon>
        <taxon>Gammaproteobacteria</taxon>
        <taxon>Pseudomonadales</taxon>
        <taxon>Pseudomonadaceae</taxon>
        <taxon>Pseudomonas</taxon>
    </lineage>
</organism>
<sequence length="206" mass="21929">MSNVRSKICGITRIEDALAAAEAGADAIGFVFYAKSPRAVDVRQARAIIAELPPFVTTVGLFVNASRCELNEILEVVPLDLLQFHGDETPQDCEGYHRPWIKALRVRPGDDLEAACQRYAGARGILLDTYVPGVPGGTGEAFDWSLVPARLGKPIILAGGLSADNVGQAIARVKPYAVDVSGGVEQAKGIKDAAKIEAFMRAVKQA</sequence>